<dbReference type="EC" id="4.2.1.11" evidence="1"/>
<dbReference type="EMBL" id="AE017355">
    <property type="protein sequence ID" value="AAT64001.1"/>
    <property type="molecule type" value="Genomic_DNA"/>
</dbReference>
<dbReference type="RefSeq" id="WP_000103949.1">
    <property type="nucleotide sequence ID" value="NC_005957.1"/>
</dbReference>
<dbReference type="RefSeq" id="YP_039123.1">
    <property type="nucleotide sequence ID" value="NC_005957.1"/>
</dbReference>
<dbReference type="SMR" id="Q6HBF3"/>
<dbReference type="GeneID" id="83638809"/>
<dbReference type="KEGG" id="btk:BT9727_4814"/>
<dbReference type="PATRIC" id="fig|281309.8.peg.5120"/>
<dbReference type="HOGENOM" id="CLU_031223_2_1_9"/>
<dbReference type="UniPathway" id="UPA00109">
    <property type="reaction ID" value="UER00187"/>
</dbReference>
<dbReference type="Proteomes" id="UP000001301">
    <property type="component" value="Chromosome"/>
</dbReference>
<dbReference type="GO" id="GO:0009986">
    <property type="term" value="C:cell surface"/>
    <property type="evidence" value="ECO:0007669"/>
    <property type="project" value="UniProtKB-SubCell"/>
</dbReference>
<dbReference type="GO" id="GO:0005576">
    <property type="term" value="C:extracellular region"/>
    <property type="evidence" value="ECO:0007669"/>
    <property type="project" value="UniProtKB-SubCell"/>
</dbReference>
<dbReference type="GO" id="GO:0000015">
    <property type="term" value="C:phosphopyruvate hydratase complex"/>
    <property type="evidence" value="ECO:0007669"/>
    <property type="project" value="InterPro"/>
</dbReference>
<dbReference type="GO" id="GO:0000287">
    <property type="term" value="F:magnesium ion binding"/>
    <property type="evidence" value="ECO:0007669"/>
    <property type="project" value="UniProtKB-UniRule"/>
</dbReference>
<dbReference type="GO" id="GO:0004634">
    <property type="term" value="F:phosphopyruvate hydratase activity"/>
    <property type="evidence" value="ECO:0007669"/>
    <property type="project" value="UniProtKB-UniRule"/>
</dbReference>
<dbReference type="GO" id="GO:0006096">
    <property type="term" value="P:glycolytic process"/>
    <property type="evidence" value="ECO:0007669"/>
    <property type="project" value="UniProtKB-UniRule"/>
</dbReference>
<dbReference type="CDD" id="cd03313">
    <property type="entry name" value="enolase"/>
    <property type="match status" value="1"/>
</dbReference>
<dbReference type="FunFam" id="3.20.20.120:FF:000001">
    <property type="entry name" value="Enolase"/>
    <property type="match status" value="1"/>
</dbReference>
<dbReference type="FunFam" id="3.30.390.10:FF:000001">
    <property type="entry name" value="Enolase"/>
    <property type="match status" value="1"/>
</dbReference>
<dbReference type="Gene3D" id="3.20.20.120">
    <property type="entry name" value="Enolase-like C-terminal domain"/>
    <property type="match status" value="1"/>
</dbReference>
<dbReference type="Gene3D" id="3.30.390.10">
    <property type="entry name" value="Enolase-like, N-terminal domain"/>
    <property type="match status" value="1"/>
</dbReference>
<dbReference type="HAMAP" id="MF_00318">
    <property type="entry name" value="Enolase"/>
    <property type="match status" value="1"/>
</dbReference>
<dbReference type="InterPro" id="IPR000941">
    <property type="entry name" value="Enolase"/>
</dbReference>
<dbReference type="InterPro" id="IPR036849">
    <property type="entry name" value="Enolase-like_C_sf"/>
</dbReference>
<dbReference type="InterPro" id="IPR029017">
    <property type="entry name" value="Enolase-like_N"/>
</dbReference>
<dbReference type="InterPro" id="IPR020810">
    <property type="entry name" value="Enolase_C"/>
</dbReference>
<dbReference type="InterPro" id="IPR020809">
    <property type="entry name" value="Enolase_CS"/>
</dbReference>
<dbReference type="InterPro" id="IPR020811">
    <property type="entry name" value="Enolase_N"/>
</dbReference>
<dbReference type="NCBIfam" id="TIGR01060">
    <property type="entry name" value="eno"/>
    <property type="match status" value="1"/>
</dbReference>
<dbReference type="PANTHER" id="PTHR11902">
    <property type="entry name" value="ENOLASE"/>
    <property type="match status" value="1"/>
</dbReference>
<dbReference type="PANTHER" id="PTHR11902:SF1">
    <property type="entry name" value="ENOLASE"/>
    <property type="match status" value="1"/>
</dbReference>
<dbReference type="Pfam" id="PF00113">
    <property type="entry name" value="Enolase_C"/>
    <property type="match status" value="1"/>
</dbReference>
<dbReference type="Pfam" id="PF03952">
    <property type="entry name" value="Enolase_N"/>
    <property type="match status" value="1"/>
</dbReference>
<dbReference type="PIRSF" id="PIRSF001400">
    <property type="entry name" value="Enolase"/>
    <property type="match status" value="1"/>
</dbReference>
<dbReference type="PRINTS" id="PR00148">
    <property type="entry name" value="ENOLASE"/>
</dbReference>
<dbReference type="SFLD" id="SFLDS00001">
    <property type="entry name" value="Enolase"/>
    <property type="match status" value="1"/>
</dbReference>
<dbReference type="SFLD" id="SFLDF00002">
    <property type="entry name" value="enolase"/>
    <property type="match status" value="1"/>
</dbReference>
<dbReference type="SMART" id="SM01192">
    <property type="entry name" value="Enolase_C"/>
    <property type="match status" value="1"/>
</dbReference>
<dbReference type="SMART" id="SM01193">
    <property type="entry name" value="Enolase_N"/>
    <property type="match status" value="1"/>
</dbReference>
<dbReference type="SUPFAM" id="SSF51604">
    <property type="entry name" value="Enolase C-terminal domain-like"/>
    <property type="match status" value="1"/>
</dbReference>
<dbReference type="SUPFAM" id="SSF54826">
    <property type="entry name" value="Enolase N-terminal domain-like"/>
    <property type="match status" value="1"/>
</dbReference>
<dbReference type="PROSITE" id="PS00164">
    <property type="entry name" value="ENOLASE"/>
    <property type="match status" value="1"/>
</dbReference>
<protein>
    <recommendedName>
        <fullName evidence="1">Enolase</fullName>
        <ecNumber evidence="1">4.2.1.11</ecNumber>
    </recommendedName>
    <alternativeName>
        <fullName evidence="1">2-phospho-D-glycerate hydro-lyase</fullName>
    </alternativeName>
    <alternativeName>
        <fullName evidence="1">2-phosphoglycerate dehydratase</fullName>
    </alternativeName>
</protein>
<reference key="1">
    <citation type="journal article" date="2006" name="J. Bacteriol.">
        <title>Pathogenomic sequence analysis of Bacillus cereus and Bacillus thuringiensis isolates closely related to Bacillus anthracis.</title>
        <authorList>
            <person name="Han C.S."/>
            <person name="Xie G."/>
            <person name="Challacombe J.F."/>
            <person name="Altherr M.R."/>
            <person name="Bhotika S.S."/>
            <person name="Bruce D."/>
            <person name="Campbell C.S."/>
            <person name="Campbell M.L."/>
            <person name="Chen J."/>
            <person name="Chertkov O."/>
            <person name="Cleland C."/>
            <person name="Dimitrijevic M."/>
            <person name="Doggett N.A."/>
            <person name="Fawcett J.J."/>
            <person name="Glavina T."/>
            <person name="Goodwin L.A."/>
            <person name="Hill K.K."/>
            <person name="Hitchcock P."/>
            <person name="Jackson P.J."/>
            <person name="Keim P."/>
            <person name="Kewalramani A.R."/>
            <person name="Longmire J."/>
            <person name="Lucas S."/>
            <person name="Malfatti S."/>
            <person name="McMurry K."/>
            <person name="Meincke L.J."/>
            <person name="Misra M."/>
            <person name="Moseman B.L."/>
            <person name="Mundt M."/>
            <person name="Munk A.C."/>
            <person name="Okinaka R.T."/>
            <person name="Parson-Quintana B."/>
            <person name="Reilly L.P."/>
            <person name="Richardson P."/>
            <person name="Robinson D.L."/>
            <person name="Rubin E."/>
            <person name="Saunders E."/>
            <person name="Tapia R."/>
            <person name="Tesmer J.G."/>
            <person name="Thayer N."/>
            <person name="Thompson L.S."/>
            <person name="Tice H."/>
            <person name="Ticknor L.O."/>
            <person name="Wills P.L."/>
            <person name="Brettin T.S."/>
            <person name="Gilna P."/>
        </authorList>
    </citation>
    <scope>NUCLEOTIDE SEQUENCE [LARGE SCALE GENOMIC DNA]</scope>
    <source>
        <strain>97-27</strain>
    </source>
</reference>
<accession>Q6HBF3</accession>
<evidence type="ECO:0000255" key="1">
    <source>
        <dbReference type="HAMAP-Rule" id="MF_00318"/>
    </source>
</evidence>
<name>ENO_BACHK</name>
<keyword id="KW-0963">Cytoplasm</keyword>
<keyword id="KW-0324">Glycolysis</keyword>
<keyword id="KW-0456">Lyase</keyword>
<keyword id="KW-0460">Magnesium</keyword>
<keyword id="KW-0479">Metal-binding</keyword>
<keyword id="KW-0964">Secreted</keyword>
<gene>
    <name evidence="1" type="primary">eno</name>
    <name type="ordered locus">BT9727_4814</name>
</gene>
<comment type="function">
    <text evidence="1">Catalyzes the reversible conversion of 2-phosphoglycerate (2-PG) into phosphoenolpyruvate (PEP). It is essential for the degradation of carbohydrates via glycolysis.</text>
</comment>
<comment type="catalytic activity">
    <reaction evidence="1">
        <text>(2R)-2-phosphoglycerate = phosphoenolpyruvate + H2O</text>
        <dbReference type="Rhea" id="RHEA:10164"/>
        <dbReference type="ChEBI" id="CHEBI:15377"/>
        <dbReference type="ChEBI" id="CHEBI:58289"/>
        <dbReference type="ChEBI" id="CHEBI:58702"/>
        <dbReference type="EC" id="4.2.1.11"/>
    </reaction>
</comment>
<comment type="cofactor">
    <cofactor evidence="1">
        <name>Mg(2+)</name>
        <dbReference type="ChEBI" id="CHEBI:18420"/>
    </cofactor>
    <text evidence="1">Binds a second Mg(2+) ion via substrate during catalysis.</text>
</comment>
<comment type="pathway">
    <text evidence="1">Carbohydrate degradation; glycolysis; pyruvate from D-glyceraldehyde 3-phosphate: step 4/5.</text>
</comment>
<comment type="subcellular location">
    <subcellularLocation>
        <location evidence="1">Cytoplasm</location>
    </subcellularLocation>
    <subcellularLocation>
        <location evidence="1">Secreted</location>
    </subcellularLocation>
    <subcellularLocation>
        <location evidence="1">Cell surface</location>
    </subcellularLocation>
    <text evidence="1">Fractions of enolase are present in both the cytoplasm and on the cell surface.</text>
</comment>
<comment type="similarity">
    <text evidence="1">Belongs to the enolase family.</text>
</comment>
<feature type="chain" id="PRO_0000133839" description="Enolase">
    <location>
        <begin position="1"/>
        <end position="431"/>
    </location>
</feature>
<feature type="active site" description="Proton donor" evidence="1">
    <location>
        <position position="205"/>
    </location>
</feature>
<feature type="active site" description="Proton acceptor" evidence="1">
    <location>
        <position position="340"/>
    </location>
</feature>
<feature type="binding site" evidence="1">
    <location>
        <position position="163"/>
    </location>
    <ligand>
        <name>(2R)-2-phosphoglycerate</name>
        <dbReference type="ChEBI" id="CHEBI:58289"/>
    </ligand>
</feature>
<feature type="binding site" evidence="1">
    <location>
        <position position="242"/>
    </location>
    <ligand>
        <name>Mg(2+)</name>
        <dbReference type="ChEBI" id="CHEBI:18420"/>
    </ligand>
</feature>
<feature type="binding site" evidence="1">
    <location>
        <position position="288"/>
    </location>
    <ligand>
        <name>Mg(2+)</name>
        <dbReference type="ChEBI" id="CHEBI:18420"/>
    </ligand>
</feature>
<feature type="binding site" evidence="1">
    <location>
        <position position="315"/>
    </location>
    <ligand>
        <name>Mg(2+)</name>
        <dbReference type="ChEBI" id="CHEBI:18420"/>
    </ligand>
</feature>
<feature type="binding site" evidence="1">
    <location>
        <position position="340"/>
    </location>
    <ligand>
        <name>(2R)-2-phosphoglycerate</name>
        <dbReference type="ChEBI" id="CHEBI:58289"/>
    </ligand>
</feature>
<feature type="binding site" evidence="1">
    <location>
        <position position="369"/>
    </location>
    <ligand>
        <name>(2R)-2-phosphoglycerate</name>
        <dbReference type="ChEBI" id="CHEBI:58289"/>
    </ligand>
</feature>
<feature type="binding site" evidence="1">
    <location>
        <position position="370"/>
    </location>
    <ligand>
        <name>(2R)-2-phosphoglycerate</name>
        <dbReference type="ChEBI" id="CHEBI:58289"/>
    </ligand>
</feature>
<feature type="binding site" evidence="1">
    <location>
        <position position="391"/>
    </location>
    <ligand>
        <name>(2R)-2-phosphoglycerate</name>
        <dbReference type="ChEBI" id="CHEBI:58289"/>
    </ligand>
</feature>
<organism>
    <name type="scientific">Bacillus thuringiensis subsp. konkukian (strain 97-27)</name>
    <dbReference type="NCBI Taxonomy" id="281309"/>
    <lineage>
        <taxon>Bacteria</taxon>
        <taxon>Bacillati</taxon>
        <taxon>Bacillota</taxon>
        <taxon>Bacilli</taxon>
        <taxon>Bacillales</taxon>
        <taxon>Bacillaceae</taxon>
        <taxon>Bacillus</taxon>
        <taxon>Bacillus cereus group</taxon>
    </lineage>
</organism>
<proteinExistence type="inferred from homology"/>
<sequence length="431" mass="46418">MSTIIDVYAREVLDSRGNPTVEVEVYTESGAFGRAIVPSGASTGEHEAVELRDGDKSRYLGKGVMNAVNNVNEAIAPEIVGFDVTDQAGIDRAMIELDGTPNKGKLGANAILGVSMAVAHAAADFVGLPLYRYLGGFNAKQLPTPMMNIINGGSHADNNVDFQEFMILPVGAPTFKESIRMGAEVFHALKAVLHDKGLNTAVGDEGGFAPNLGSNREALEVIIEAIEKAGYKAGENVFLGMDVASSEFYNKETGKYDLAGEGRTGLTSAEMVDFYEELCKDFPIISIEDGLDENDWDGHKLLTERIGDKVQLVGDDLFVTNTQKLAEGIEKGISNSILIKVNQIGTLTETFEAIEMAKRAGYTAVVSHRSGETEDATIADIAVATNAGQIKTGSMSRTDRIAKYNQLLRIEDELGEIAVYDGIKSFYNIKR</sequence>